<feature type="chain" id="PRO_0000071270" description="Uncharacterized protein L352">
    <location>
        <begin position="1"/>
        <end position="292"/>
    </location>
</feature>
<organismHost>
    <name type="scientific">Acanthamoeba polyphaga</name>
    <name type="common">Amoeba</name>
    <dbReference type="NCBI Taxonomy" id="5757"/>
</organismHost>
<accession>Q5UQU0</accession>
<sequence length="292" mass="33827">MNNYFDAGNFNTVFNNPNQMSVHGYDPKSGFNNHGFMNRNNLLSNNLCNNLLDEEITEYSVLIDSKDRNYQVYPDPFKYTVKFNPLRRTTEIIDGEKVVNEEPMPVINDNFKNVKYIRLESIILPFYTKIRFVDEDIDGDIVQRAKVNTSKPLTDNLYVLMRIEEFKGVNYKSSNDVLAESFAVIYFDNKISNTHYEGKCNGGIKIFPSDKLGTINSLKISFVSPYGEEINCDHLMKEIKSNMICNCDDPEGDEYTDCFKHNLFHPLNPIFQHHVHFKIGVVTPRLNKLNFN</sequence>
<name>YL352_MIMIV</name>
<protein>
    <recommendedName>
        <fullName>Uncharacterized protein L352</fullName>
    </recommendedName>
</protein>
<proteinExistence type="evidence at protein level"/>
<dbReference type="EMBL" id="AY653733">
    <property type="protein sequence ID" value="AAV50621.1"/>
    <property type="molecule type" value="Genomic_DNA"/>
</dbReference>
<dbReference type="KEGG" id="vg:9924971"/>
<dbReference type="OrthoDB" id="9572at10239"/>
<dbReference type="Proteomes" id="UP000001134">
    <property type="component" value="Genome"/>
</dbReference>
<dbReference type="GO" id="GO:0044423">
    <property type="term" value="C:virion component"/>
    <property type="evidence" value="ECO:0007669"/>
    <property type="project" value="UniProtKB-KW"/>
</dbReference>
<gene>
    <name type="ordered locus">MIMI_L352</name>
</gene>
<evidence type="ECO:0000269" key="1">
    <source>
    </source>
</evidence>
<organism>
    <name type="scientific">Acanthamoeba polyphaga mimivirus</name>
    <name type="common">APMV</name>
    <dbReference type="NCBI Taxonomy" id="212035"/>
    <lineage>
        <taxon>Viruses</taxon>
        <taxon>Varidnaviria</taxon>
        <taxon>Bamfordvirae</taxon>
        <taxon>Nucleocytoviricota</taxon>
        <taxon>Megaviricetes</taxon>
        <taxon>Imitervirales</taxon>
        <taxon>Mimiviridae</taxon>
        <taxon>Megamimivirinae</taxon>
        <taxon>Mimivirus</taxon>
        <taxon>Mimivirus bradfordmassiliense</taxon>
    </lineage>
</organism>
<comment type="subcellular location">
    <subcellularLocation>
        <location evidence="1">Virion</location>
    </subcellularLocation>
</comment>
<reference key="1">
    <citation type="journal article" date="2004" name="Science">
        <title>The 1.2-megabase genome sequence of Mimivirus.</title>
        <authorList>
            <person name="Raoult D."/>
            <person name="Audic S."/>
            <person name="Robert C."/>
            <person name="Abergel C."/>
            <person name="Renesto P."/>
            <person name="Ogata H."/>
            <person name="La Scola B."/>
            <person name="Susan M."/>
            <person name="Claverie J.-M."/>
        </authorList>
    </citation>
    <scope>NUCLEOTIDE SEQUENCE [LARGE SCALE GENOMIC DNA]</scope>
    <source>
        <strain>Rowbotham-Bradford</strain>
    </source>
</reference>
<reference key="2">
    <citation type="journal article" date="2006" name="J. Virol.">
        <title>Mimivirus giant particles incorporate a large fraction of anonymous and unique gene products.</title>
        <authorList>
            <person name="Renesto P."/>
            <person name="Abergel C."/>
            <person name="Decloquement P."/>
            <person name="Moinier D."/>
            <person name="Azza S."/>
            <person name="Ogata H."/>
            <person name="Fourquet P."/>
            <person name="Gorvel J.-P."/>
            <person name="Claverie J.-M."/>
            <person name="Raoult D."/>
        </authorList>
    </citation>
    <scope>IDENTIFICATION BY MASS SPECTROMETRY [LARGE SCALE ANALYSIS]</scope>
    <scope>SUBCELLULAR LOCATION</scope>
</reference>
<keyword id="KW-1185">Reference proteome</keyword>
<keyword id="KW-0946">Virion</keyword>